<comment type="function">
    <text evidence="1">Catalyzes the reversible phosphorylation of UMP to UDP.</text>
</comment>
<comment type="catalytic activity">
    <reaction evidence="1">
        <text>UMP + ATP = UDP + ADP</text>
        <dbReference type="Rhea" id="RHEA:24400"/>
        <dbReference type="ChEBI" id="CHEBI:30616"/>
        <dbReference type="ChEBI" id="CHEBI:57865"/>
        <dbReference type="ChEBI" id="CHEBI:58223"/>
        <dbReference type="ChEBI" id="CHEBI:456216"/>
        <dbReference type="EC" id="2.7.4.22"/>
    </reaction>
</comment>
<comment type="activity regulation">
    <text evidence="1">Inhibited by UTP.</text>
</comment>
<comment type="pathway">
    <text evidence="1">Pyrimidine metabolism; CTP biosynthesis via de novo pathway; UDP from UMP (UMPK route): step 1/1.</text>
</comment>
<comment type="subunit">
    <text evidence="1">Homohexamer.</text>
</comment>
<comment type="subcellular location">
    <subcellularLocation>
        <location evidence="1">Cytoplasm</location>
    </subcellularLocation>
</comment>
<comment type="similarity">
    <text evidence="1">Belongs to the UMP kinase family.</text>
</comment>
<proteinExistence type="inferred from homology"/>
<organism>
    <name type="scientific">Fusobacterium nucleatum subsp. nucleatum (strain ATCC 25586 / DSM 15643 / BCRC 10681 / CIP 101130 / JCM 8532 / KCTC 2640 / LMG 13131 / VPI 4355)</name>
    <dbReference type="NCBI Taxonomy" id="190304"/>
    <lineage>
        <taxon>Bacteria</taxon>
        <taxon>Fusobacteriati</taxon>
        <taxon>Fusobacteriota</taxon>
        <taxon>Fusobacteriia</taxon>
        <taxon>Fusobacteriales</taxon>
        <taxon>Fusobacteriaceae</taxon>
        <taxon>Fusobacterium</taxon>
    </lineage>
</organism>
<protein>
    <recommendedName>
        <fullName evidence="1">Uridylate kinase</fullName>
        <shortName evidence="1">UK</shortName>
        <ecNumber evidence="1">2.7.4.22</ecNumber>
    </recommendedName>
    <alternativeName>
        <fullName evidence="1">Uridine monophosphate kinase</fullName>
        <shortName evidence="1">UMP kinase</shortName>
        <shortName evidence="1">UMPK</shortName>
    </alternativeName>
</protein>
<dbReference type="EC" id="2.7.4.22" evidence="1"/>
<dbReference type="EMBL" id="AE009951">
    <property type="protein sequence ID" value="AAL93737.1"/>
    <property type="molecule type" value="Genomic_DNA"/>
</dbReference>
<dbReference type="RefSeq" id="NP_602438.1">
    <property type="nucleotide sequence ID" value="NC_003454.1"/>
</dbReference>
<dbReference type="RefSeq" id="WP_005904124.1">
    <property type="nucleotide sequence ID" value="NZ_OZ209243.1"/>
</dbReference>
<dbReference type="SMR" id="Q8R6G5"/>
<dbReference type="FunCoup" id="Q8R6G5">
    <property type="interactions" value="446"/>
</dbReference>
<dbReference type="STRING" id="190304.FN1622"/>
<dbReference type="PaxDb" id="190304-FN1622"/>
<dbReference type="EnsemblBacteria" id="AAL93737">
    <property type="protein sequence ID" value="AAL93737"/>
    <property type="gene ID" value="FN1622"/>
</dbReference>
<dbReference type="GeneID" id="79782561"/>
<dbReference type="KEGG" id="fnu:FN1622"/>
<dbReference type="PATRIC" id="fig|190304.8.peg.115"/>
<dbReference type="eggNOG" id="COG0528">
    <property type="taxonomic scope" value="Bacteria"/>
</dbReference>
<dbReference type="HOGENOM" id="CLU_033861_0_0_0"/>
<dbReference type="InParanoid" id="Q8R6G5"/>
<dbReference type="BioCyc" id="FNUC190304:G1FZS-125-MONOMER"/>
<dbReference type="UniPathway" id="UPA00159">
    <property type="reaction ID" value="UER00275"/>
</dbReference>
<dbReference type="Proteomes" id="UP000002521">
    <property type="component" value="Chromosome"/>
</dbReference>
<dbReference type="GO" id="GO:0005737">
    <property type="term" value="C:cytoplasm"/>
    <property type="evidence" value="ECO:0007669"/>
    <property type="project" value="UniProtKB-SubCell"/>
</dbReference>
<dbReference type="GO" id="GO:0005524">
    <property type="term" value="F:ATP binding"/>
    <property type="evidence" value="ECO:0007669"/>
    <property type="project" value="UniProtKB-KW"/>
</dbReference>
<dbReference type="GO" id="GO:0033862">
    <property type="term" value="F:UMP kinase activity"/>
    <property type="evidence" value="ECO:0000318"/>
    <property type="project" value="GO_Central"/>
</dbReference>
<dbReference type="GO" id="GO:0044210">
    <property type="term" value="P:'de novo' CTP biosynthetic process"/>
    <property type="evidence" value="ECO:0007669"/>
    <property type="project" value="UniProtKB-UniRule"/>
</dbReference>
<dbReference type="GO" id="GO:0006225">
    <property type="term" value="P:UDP biosynthetic process"/>
    <property type="evidence" value="ECO:0000318"/>
    <property type="project" value="GO_Central"/>
</dbReference>
<dbReference type="CDD" id="cd04254">
    <property type="entry name" value="AAK_UMPK-PyrH-Ec"/>
    <property type="match status" value="1"/>
</dbReference>
<dbReference type="FunFam" id="3.40.1160.10:FF:000001">
    <property type="entry name" value="Uridylate kinase"/>
    <property type="match status" value="1"/>
</dbReference>
<dbReference type="Gene3D" id="3.40.1160.10">
    <property type="entry name" value="Acetylglutamate kinase-like"/>
    <property type="match status" value="1"/>
</dbReference>
<dbReference type="HAMAP" id="MF_01220_B">
    <property type="entry name" value="PyrH_B"/>
    <property type="match status" value="1"/>
</dbReference>
<dbReference type="InterPro" id="IPR036393">
    <property type="entry name" value="AceGlu_kinase-like_sf"/>
</dbReference>
<dbReference type="InterPro" id="IPR001048">
    <property type="entry name" value="Asp/Glu/Uridylate_kinase"/>
</dbReference>
<dbReference type="InterPro" id="IPR011817">
    <property type="entry name" value="Uridylate_kinase"/>
</dbReference>
<dbReference type="InterPro" id="IPR015963">
    <property type="entry name" value="Uridylate_kinase_bac"/>
</dbReference>
<dbReference type="NCBIfam" id="TIGR02075">
    <property type="entry name" value="pyrH_bact"/>
    <property type="match status" value="1"/>
</dbReference>
<dbReference type="PANTHER" id="PTHR42833">
    <property type="entry name" value="URIDYLATE KINASE"/>
    <property type="match status" value="1"/>
</dbReference>
<dbReference type="PANTHER" id="PTHR42833:SF4">
    <property type="entry name" value="URIDYLATE KINASE PUMPKIN, CHLOROPLASTIC"/>
    <property type="match status" value="1"/>
</dbReference>
<dbReference type="Pfam" id="PF00696">
    <property type="entry name" value="AA_kinase"/>
    <property type="match status" value="1"/>
</dbReference>
<dbReference type="PIRSF" id="PIRSF005650">
    <property type="entry name" value="Uridylate_kin"/>
    <property type="match status" value="1"/>
</dbReference>
<dbReference type="SUPFAM" id="SSF53633">
    <property type="entry name" value="Carbamate kinase-like"/>
    <property type="match status" value="1"/>
</dbReference>
<evidence type="ECO:0000255" key="1">
    <source>
        <dbReference type="HAMAP-Rule" id="MF_01220"/>
    </source>
</evidence>
<keyword id="KW-0067">ATP-binding</keyword>
<keyword id="KW-0963">Cytoplasm</keyword>
<keyword id="KW-0418">Kinase</keyword>
<keyword id="KW-0547">Nucleotide-binding</keyword>
<keyword id="KW-0665">Pyrimidine biosynthesis</keyword>
<keyword id="KW-1185">Reference proteome</keyword>
<keyword id="KW-0808">Transferase</keyword>
<sequence>MESPFYKKILLKLSGEALMGDQEFGISSDVIASYAKQIKEIVDLGVEVSIVIGGGNIFRGLSGAAQGVDRVTGDHMGMLATVINSLALQNSIEKLGVPTRVQTAIEMPKVAEPFIKRRAQRHLEKGRVVIFGAGTGNPYFTTDTAAALRAIEMETDVVIKATKVDGIYDKDPVKYPDAKKYQTVTYNEVLAKDLKVMDATAISLCRENKLPIIVFNSLDEGNLKKVVMGEHIGTTVVAD</sequence>
<feature type="chain" id="PRO_0000143845" description="Uridylate kinase">
    <location>
        <begin position="1"/>
        <end position="239"/>
    </location>
</feature>
<feature type="binding site" evidence="1">
    <location>
        <begin position="12"/>
        <end position="15"/>
    </location>
    <ligand>
        <name>ATP</name>
        <dbReference type="ChEBI" id="CHEBI:30616"/>
    </ligand>
</feature>
<feature type="binding site" evidence="1">
    <location>
        <position position="54"/>
    </location>
    <ligand>
        <name>UMP</name>
        <dbReference type="ChEBI" id="CHEBI:57865"/>
    </ligand>
</feature>
<feature type="binding site" evidence="1">
    <location>
        <position position="55"/>
    </location>
    <ligand>
        <name>ATP</name>
        <dbReference type="ChEBI" id="CHEBI:30616"/>
    </ligand>
</feature>
<feature type="binding site" evidence="1">
    <location>
        <position position="59"/>
    </location>
    <ligand>
        <name>ATP</name>
        <dbReference type="ChEBI" id="CHEBI:30616"/>
    </ligand>
</feature>
<feature type="binding site" evidence="1">
    <location>
        <position position="74"/>
    </location>
    <ligand>
        <name>UMP</name>
        <dbReference type="ChEBI" id="CHEBI:57865"/>
    </ligand>
</feature>
<feature type="binding site" evidence="1">
    <location>
        <begin position="135"/>
        <end position="142"/>
    </location>
    <ligand>
        <name>UMP</name>
        <dbReference type="ChEBI" id="CHEBI:57865"/>
    </ligand>
</feature>
<feature type="binding site" evidence="1">
    <location>
        <position position="162"/>
    </location>
    <ligand>
        <name>ATP</name>
        <dbReference type="ChEBI" id="CHEBI:30616"/>
    </ligand>
</feature>
<feature type="binding site" evidence="1">
    <location>
        <position position="168"/>
    </location>
    <ligand>
        <name>ATP</name>
        <dbReference type="ChEBI" id="CHEBI:30616"/>
    </ligand>
</feature>
<feature type="binding site" evidence="1">
    <location>
        <position position="171"/>
    </location>
    <ligand>
        <name>ATP</name>
        <dbReference type="ChEBI" id="CHEBI:30616"/>
    </ligand>
</feature>
<name>PYRH_FUSNN</name>
<gene>
    <name evidence="1" type="primary">pyrH</name>
    <name type="ordered locus">FN1622</name>
</gene>
<accession>Q8R6G5</accession>
<reference key="1">
    <citation type="journal article" date="2002" name="J. Bacteriol.">
        <title>Genome sequence and analysis of the oral bacterium Fusobacterium nucleatum strain ATCC 25586.</title>
        <authorList>
            <person name="Kapatral V."/>
            <person name="Anderson I."/>
            <person name="Ivanova N."/>
            <person name="Reznik G."/>
            <person name="Los T."/>
            <person name="Lykidis A."/>
            <person name="Bhattacharyya A."/>
            <person name="Bartman A."/>
            <person name="Gardner W."/>
            <person name="Grechkin G."/>
            <person name="Zhu L."/>
            <person name="Vasieva O."/>
            <person name="Chu L."/>
            <person name="Kogan Y."/>
            <person name="Chaga O."/>
            <person name="Goltsman E."/>
            <person name="Bernal A."/>
            <person name="Larsen N."/>
            <person name="D'Souza M."/>
            <person name="Walunas T."/>
            <person name="Pusch G."/>
            <person name="Haselkorn R."/>
            <person name="Fonstein M."/>
            <person name="Kyrpides N.C."/>
            <person name="Overbeek R."/>
        </authorList>
    </citation>
    <scope>NUCLEOTIDE SEQUENCE [LARGE SCALE GENOMIC DNA]</scope>
    <source>
        <strain>ATCC 25586 / DSM 15643 / BCRC 10681 / CIP 101130 / JCM 8532 / KCTC 2640 / LMG 13131 / VPI 4355</strain>
    </source>
</reference>